<keyword id="KW-0067">ATP-binding</keyword>
<keyword id="KW-0436">Ligase</keyword>
<keyword id="KW-0460">Magnesium</keyword>
<keyword id="KW-0479">Metal-binding</keyword>
<keyword id="KW-0547">Nucleotide-binding</keyword>
<keyword id="KW-0816">Tricarboxylic acid cycle</keyword>
<organism>
    <name type="scientific">Edwardsiella ictaluri (strain 93-146)</name>
    <dbReference type="NCBI Taxonomy" id="634503"/>
    <lineage>
        <taxon>Bacteria</taxon>
        <taxon>Pseudomonadati</taxon>
        <taxon>Pseudomonadota</taxon>
        <taxon>Gammaproteobacteria</taxon>
        <taxon>Enterobacterales</taxon>
        <taxon>Hafniaceae</taxon>
        <taxon>Edwardsiella</taxon>
    </lineage>
</organism>
<protein>
    <recommendedName>
        <fullName evidence="1">Succinate--CoA ligase [ADP-forming] subunit beta</fullName>
        <ecNumber evidence="1">6.2.1.5</ecNumber>
    </recommendedName>
    <alternativeName>
        <fullName evidence="1">Succinyl-CoA synthetase subunit beta</fullName>
        <shortName evidence="1">SCS-beta</shortName>
    </alternativeName>
</protein>
<reference key="1">
    <citation type="submission" date="2009-03" db="EMBL/GenBank/DDBJ databases">
        <title>Complete genome sequence of Edwardsiella ictaluri 93-146.</title>
        <authorList>
            <person name="Williams M.L."/>
            <person name="Gillaspy A.F."/>
            <person name="Dyer D.W."/>
            <person name="Thune R.L."/>
            <person name="Waldbieser G.C."/>
            <person name="Schuster S.C."/>
            <person name="Gipson J."/>
            <person name="Zaitshik J."/>
            <person name="Landry C."/>
            <person name="Lawrence M.L."/>
        </authorList>
    </citation>
    <scope>NUCLEOTIDE SEQUENCE [LARGE SCALE GENOMIC DNA]</scope>
    <source>
        <strain>93-146</strain>
    </source>
</reference>
<accession>C5BEM7</accession>
<comment type="function">
    <text evidence="1">Succinyl-CoA synthetase functions in the citric acid cycle (TCA), coupling the hydrolysis of succinyl-CoA to the synthesis of either ATP or GTP and thus represents the only step of substrate-level phosphorylation in the TCA. The beta subunit provides nucleotide specificity of the enzyme and binds the substrate succinate, while the binding sites for coenzyme A and phosphate are found in the alpha subunit.</text>
</comment>
<comment type="catalytic activity">
    <reaction evidence="1">
        <text>succinate + ATP + CoA = succinyl-CoA + ADP + phosphate</text>
        <dbReference type="Rhea" id="RHEA:17661"/>
        <dbReference type="ChEBI" id="CHEBI:30031"/>
        <dbReference type="ChEBI" id="CHEBI:30616"/>
        <dbReference type="ChEBI" id="CHEBI:43474"/>
        <dbReference type="ChEBI" id="CHEBI:57287"/>
        <dbReference type="ChEBI" id="CHEBI:57292"/>
        <dbReference type="ChEBI" id="CHEBI:456216"/>
        <dbReference type="EC" id="6.2.1.5"/>
    </reaction>
    <physiologicalReaction direction="right-to-left" evidence="1">
        <dbReference type="Rhea" id="RHEA:17663"/>
    </physiologicalReaction>
</comment>
<comment type="catalytic activity">
    <reaction evidence="1">
        <text>GTP + succinate + CoA = succinyl-CoA + GDP + phosphate</text>
        <dbReference type="Rhea" id="RHEA:22120"/>
        <dbReference type="ChEBI" id="CHEBI:30031"/>
        <dbReference type="ChEBI" id="CHEBI:37565"/>
        <dbReference type="ChEBI" id="CHEBI:43474"/>
        <dbReference type="ChEBI" id="CHEBI:57287"/>
        <dbReference type="ChEBI" id="CHEBI:57292"/>
        <dbReference type="ChEBI" id="CHEBI:58189"/>
    </reaction>
    <physiologicalReaction direction="right-to-left" evidence="1">
        <dbReference type="Rhea" id="RHEA:22122"/>
    </physiologicalReaction>
</comment>
<comment type="cofactor">
    <cofactor evidence="1">
        <name>Mg(2+)</name>
        <dbReference type="ChEBI" id="CHEBI:18420"/>
    </cofactor>
    <text evidence="1">Binds 1 Mg(2+) ion per subunit.</text>
</comment>
<comment type="pathway">
    <text evidence="1">Carbohydrate metabolism; tricarboxylic acid cycle; succinate from succinyl-CoA (ligase route): step 1/1.</text>
</comment>
<comment type="subunit">
    <text evidence="1">Heterotetramer of two alpha and two beta subunits.</text>
</comment>
<comment type="similarity">
    <text evidence="1">Belongs to the succinate/malate CoA ligase beta subunit family.</text>
</comment>
<sequence>MNLHEYQAKQLFAQYGLPTPEGYACSTPCQAEEAASKIGSGPWVVKCQVHAGGRGKAGGVKCVESKEAIHAFAEQWLGKRLVTYQTDAHGQPVRQILVEGATEIARELYLGAVIDRSSRRVVFMASTEGGVEIEQVAQKTPHLIHRVALDPLTGPQPYQGRELAFKLGLSGKQAQQFGQIFLGLATLFLQCDLTMAEINPLVITPQGDLLCLDGKLDVDSNALFRQPTLLEMEDPAQNDAREAHAAQWELNYVALEGNIGCMVNGAGLAMGTMDIVKLHGGAPANFLDVGGGATKERVTEAFKIILSDEHVRAVLVNIFGGIVRCDLIADGIIGAVAEVGVHVPVVVRLEGNNAELGTRILADSGLNIIAATSLTDAARQVVSAVEGK</sequence>
<feature type="chain" id="PRO_1000212022" description="Succinate--CoA ligase [ADP-forming] subunit beta">
    <location>
        <begin position="1"/>
        <end position="388"/>
    </location>
</feature>
<feature type="domain" description="ATP-grasp" evidence="1">
    <location>
        <begin position="9"/>
        <end position="244"/>
    </location>
</feature>
<feature type="binding site" evidence="1">
    <location>
        <position position="46"/>
    </location>
    <ligand>
        <name>ATP</name>
        <dbReference type="ChEBI" id="CHEBI:30616"/>
    </ligand>
</feature>
<feature type="binding site" evidence="1">
    <location>
        <begin position="53"/>
        <end position="55"/>
    </location>
    <ligand>
        <name>ATP</name>
        <dbReference type="ChEBI" id="CHEBI:30616"/>
    </ligand>
</feature>
<feature type="binding site" evidence="1">
    <location>
        <position position="99"/>
    </location>
    <ligand>
        <name>ATP</name>
        <dbReference type="ChEBI" id="CHEBI:30616"/>
    </ligand>
</feature>
<feature type="binding site" evidence="1">
    <location>
        <position position="102"/>
    </location>
    <ligand>
        <name>ATP</name>
        <dbReference type="ChEBI" id="CHEBI:30616"/>
    </ligand>
</feature>
<feature type="binding site" evidence="1">
    <location>
        <position position="107"/>
    </location>
    <ligand>
        <name>ATP</name>
        <dbReference type="ChEBI" id="CHEBI:30616"/>
    </ligand>
</feature>
<feature type="binding site" evidence="1">
    <location>
        <position position="199"/>
    </location>
    <ligand>
        <name>Mg(2+)</name>
        <dbReference type="ChEBI" id="CHEBI:18420"/>
    </ligand>
</feature>
<feature type="binding site" evidence="1">
    <location>
        <position position="213"/>
    </location>
    <ligand>
        <name>Mg(2+)</name>
        <dbReference type="ChEBI" id="CHEBI:18420"/>
    </ligand>
</feature>
<feature type="binding site" evidence="1">
    <location>
        <position position="264"/>
    </location>
    <ligand>
        <name>substrate</name>
        <note>ligand shared with subunit alpha</note>
    </ligand>
</feature>
<feature type="binding site" evidence="1">
    <location>
        <begin position="321"/>
        <end position="323"/>
    </location>
    <ligand>
        <name>substrate</name>
        <note>ligand shared with subunit alpha</note>
    </ligand>
</feature>
<name>SUCC_EDWI9</name>
<gene>
    <name evidence="1" type="primary">sucC</name>
    <name type="ordered locus">NT01EI_2866</name>
</gene>
<evidence type="ECO:0000255" key="1">
    <source>
        <dbReference type="HAMAP-Rule" id="MF_00558"/>
    </source>
</evidence>
<dbReference type="EC" id="6.2.1.5" evidence="1"/>
<dbReference type="EMBL" id="CP001600">
    <property type="protein sequence ID" value="ACR70027.1"/>
    <property type="molecule type" value="Genomic_DNA"/>
</dbReference>
<dbReference type="RefSeq" id="WP_015872123.1">
    <property type="nucleotide sequence ID" value="NZ_CP169062.1"/>
</dbReference>
<dbReference type="SMR" id="C5BEM7"/>
<dbReference type="STRING" id="67780.B6E78_06260"/>
<dbReference type="GeneID" id="69539753"/>
<dbReference type="KEGG" id="eic:NT01EI_2866"/>
<dbReference type="PATRIC" id="fig|634503.3.peg.2564"/>
<dbReference type="HOGENOM" id="CLU_037430_0_2_6"/>
<dbReference type="OrthoDB" id="9802602at2"/>
<dbReference type="UniPathway" id="UPA00223">
    <property type="reaction ID" value="UER00999"/>
</dbReference>
<dbReference type="Proteomes" id="UP000001485">
    <property type="component" value="Chromosome"/>
</dbReference>
<dbReference type="GO" id="GO:0005829">
    <property type="term" value="C:cytosol"/>
    <property type="evidence" value="ECO:0007669"/>
    <property type="project" value="TreeGrafter"/>
</dbReference>
<dbReference type="GO" id="GO:0042709">
    <property type="term" value="C:succinate-CoA ligase complex"/>
    <property type="evidence" value="ECO:0007669"/>
    <property type="project" value="TreeGrafter"/>
</dbReference>
<dbReference type="GO" id="GO:0005524">
    <property type="term" value="F:ATP binding"/>
    <property type="evidence" value="ECO:0007669"/>
    <property type="project" value="UniProtKB-UniRule"/>
</dbReference>
<dbReference type="GO" id="GO:0000287">
    <property type="term" value="F:magnesium ion binding"/>
    <property type="evidence" value="ECO:0007669"/>
    <property type="project" value="UniProtKB-UniRule"/>
</dbReference>
<dbReference type="GO" id="GO:0004775">
    <property type="term" value="F:succinate-CoA ligase (ADP-forming) activity"/>
    <property type="evidence" value="ECO:0007669"/>
    <property type="project" value="UniProtKB-UniRule"/>
</dbReference>
<dbReference type="GO" id="GO:0004776">
    <property type="term" value="F:succinate-CoA ligase (GDP-forming) activity"/>
    <property type="evidence" value="ECO:0007669"/>
    <property type="project" value="RHEA"/>
</dbReference>
<dbReference type="GO" id="GO:0006104">
    <property type="term" value="P:succinyl-CoA metabolic process"/>
    <property type="evidence" value="ECO:0007669"/>
    <property type="project" value="TreeGrafter"/>
</dbReference>
<dbReference type="GO" id="GO:0006099">
    <property type="term" value="P:tricarboxylic acid cycle"/>
    <property type="evidence" value="ECO:0007669"/>
    <property type="project" value="UniProtKB-UniRule"/>
</dbReference>
<dbReference type="FunFam" id="3.30.1490.20:FF:000002">
    <property type="entry name" value="Succinate--CoA ligase [ADP-forming] subunit beta"/>
    <property type="match status" value="1"/>
</dbReference>
<dbReference type="FunFam" id="3.30.470.20:FF:000002">
    <property type="entry name" value="Succinate--CoA ligase [ADP-forming] subunit beta"/>
    <property type="match status" value="1"/>
</dbReference>
<dbReference type="FunFam" id="3.40.50.261:FF:000001">
    <property type="entry name" value="Succinate--CoA ligase [ADP-forming] subunit beta"/>
    <property type="match status" value="1"/>
</dbReference>
<dbReference type="Gene3D" id="3.30.1490.20">
    <property type="entry name" value="ATP-grasp fold, A domain"/>
    <property type="match status" value="1"/>
</dbReference>
<dbReference type="Gene3D" id="3.30.470.20">
    <property type="entry name" value="ATP-grasp fold, B domain"/>
    <property type="match status" value="1"/>
</dbReference>
<dbReference type="Gene3D" id="3.40.50.261">
    <property type="entry name" value="Succinyl-CoA synthetase domains"/>
    <property type="match status" value="1"/>
</dbReference>
<dbReference type="HAMAP" id="MF_00558">
    <property type="entry name" value="Succ_CoA_beta"/>
    <property type="match status" value="1"/>
</dbReference>
<dbReference type="InterPro" id="IPR011761">
    <property type="entry name" value="ATP-grasp"/>
</dbReference>
<dbReference type="InterPro" id="IPR013650">
    <property type="entry name" value="ATP-grasp_succ-CoA_synth-type"/>
</dbReference>
<dbReference type="InterPro" id="IPR013815">
    <property type="entry name" value="ATP_grasp_subdomain_1"/>
</dbReference>
<dbReference type="InterPro" id="IPR017866">
    <property type="entry name" value="Succ-CoA_synthase_bsu_CS"/>
</dbReference>
<dbReference type="InterPro" id="IPR005811">
    <property type="entry name" value="SUCC_ACL_C"/>
</dbReference>
<dbReference type="InterPro" id="IPR005809">
    <property type="entry name" value="Succ_CoA_ligase-like_bsu"/>
</dbReference>
<dbReference type="InterPro" id="IPR016102">
    <property type="entry name" value="Succinyl-CoA_synth-like"/>
</dbReference>
<dbReference type="NCBIfam" id="NF001913">
    <property type="entry name" value="PRK00696.1"/>
    <property type="match status" value="1"/>
</dbReference>
<dbReference type="NCBIfam" id="TIGR01016">
    <property type="entry name" value="sucCoAbeta"/>
    <property type="match status" value="1"/>
</dbReference>
<dbReference type="PANTHER" id="PTHR11815:SF10">
    <property type="entry name" value="SUCCINATE--COA LIGASE [GDP-FORMING] SUBUNIT BETA, MITOCHONDRIAL"/>
    <property type="match status" value="1"/>
</dbReference>
<dbReference type="PANTHER" id="PTHR11815">
    <property type="entry name" value="SUCCINYL-COA SYNTHETASE BETA CHAIN"/>
    <property type="match status" value="1"/>
</dbReference>
<dbReference type="Pfam" id="PF08442">
    <property type="entry name" value="ATP-grasp_2"/>
    <property type="match status" value="1"/>
</dbReference>
<dbReference type="Pfam" id="PF00549">
    <property type="entry name" value="Ligase_CoA"/>
    <property type="match status" value="1"/>
</dbReference>
<dbReference type="PIRSF" id="PIRSF001554">
    <property type="entry name" value="SucCS_beta"/>
    <property type="match status" value="1"/>
</dbReference>
<dbReference type="SUPFAM" id="SSF56059">
    <property type="entry name" value="Glutathione synthetase ATP-binding domain-like"/>
    <property type="match status" value="1"/>
</dbReference>
<dbReference type="SUPFAM" id="SSF52210">
    <property type="entry name" value="Succinyl-CoA synthetase domains"/>
    <property type="match status" value="1"/>
</dbReference>
<dbReference type="PROSITE" id="PS50975">
    <property type="entry name" value="ATP_GRASP"/>
    <property type="match status" value="1"/>
</dbReference>
<dbReference type="PROSITE" id="PS01217">
    <property type="entry name" value="SUCCINYL_COA_LIG_3"/>
    <property type="match status" value="1"/>
</dbReference>
<proteinExistence type="inferred from homology"/>